<dbReference type="EMBL" id="AY081952">
    <property type="protein sequence ID" value="AAL91075.1"/>
    <property type="status" value="ALT_INIT"/>
    <property type="molecule type" value="mRNA"/>
</dbReference>
<dbReference type="EMBL" id="AC073846">
    <property type="status" value="NOT_ANNOTATED_CDS"/>
    <property type="molecule type" value="Genomic_DNA"/>
</dbReference>
<dbReference type="EMBL" id="BC064621">
    <property type="protein sequence ID" value="AAH64621.2"/>
    <property type="molecule type" value="mRNA"/>
</dbReference>
<dbReference type="CCDS" id="CCDS43596.1"/>
<dbReference type="RefSeq" id="NP_001071089.1">
    <property type="nucleotide sequence ID" value="NM_001077621.2"/>
</dbReference>
<dbReference type="SMR" id="Q86XT2"/>
<dbReference type="BioGRID" id="127583">
    <property type="interactions" value="17"/>
</dbReference>
<dbReference type="ComplexPortal" id="CPX-7148">
    <property type="entry name" value="ESCRT-I complex, VPS37D-MVB12A variant"/>
</dbReference>
<dbReference type="ComplexPortal" id="CPX-7167">
    <property type="entry name" value="ESCRT-I complex, VPS37D-MVB12B variant"/>
</dbReference>
<dbReference type="ComplexPortal" id="CPX-7203">
    <property type="entry name" value="ESCRT-I complex, VPS37D-UBAP1 variant"/>
</dbReference>
<dbReference type="CORUM" id="Q86XT2"/>
<dbReference type="FunCoup" id="Q86XT2">
    <property type="interactions" value="382"/>
</dbReference>
<dbReference type="IntAct" id="Q86XT2">
    <property type="interactions" value="16"/>
</dbReference>
<dbReference type="MINT" id="Q86XT2"/>
<dbReference type="STRING" id="9606.ENSP00000320416"/>
<dbReference type="GlyGen" id="Q86XT2">
    <property type="glycosylation" value="1 site"/>
</dbReference>
<dbReference type="iPTMnet" id="Q86XT2"/>
<dbReference type="PhosphoSitePlus" id="Q86XT2"/>
<dbReference type="BioMuta" id="VPS37D"/>
<dbReference type="DMDM" id="182702221"/>
<dbReference type="jPOST" id="Q86XT2"/>
<dbReference type="MassIVE" id="Q86XT2"/>
<dbReference type="PaxDb" id="9606-ENSP00000320416"/>
<dbReference type="PeptideAtlas" id="Q86XT2"/>
<dbReference type="ProteomicsDB" id="70330"/>
<dbReference type="Antibodypedia" id="48722">
    <property type="antibodies" value="22 antibodies from 11 providers"/>
</dbReference>
<dbReference type="DNASU" id="155382"/>
<dbReference type="Ensembl" id="ENST00000324941.5">
    <property type="protein sequence ID" value="ENSP00000320416.4"/>
    <property type="gene ID" value="ENSG00000176428.6"/>
</dbReference>
<dbReference type="GeneID" id="155382"/>
<dbReference type="KEGG" id="hsa:155382"/>
<dbReference type="MANE-Select" id="ENST00000324941.5">
    <property type="protein sequence ID" value="ENSP00000320416.4"/>
    <property type="RefSeq nucleotide sequence ID" value="NM_001077621.2"/>
    <property type="RefSeq protein sequence ID" value="NP_001071089.1"/>
</dbReference>
<dbReference type="UCSC" id="uc003tyr.4">
    <property type="organism name" value="human"/>
</dbReference>
<dbReference type="AGR" id="HGNC:18287"/>
<dbReference type="CTD" id="155382"/>
<dbReference type="DisGeNET" id="155382"/>
<dbReference type="GeneCards" id="VPS37D"/>
<dbReference type="HGNC" id="HGNC:18287">
    <property type="gene designation" value="VPS37D"/>
</dbReference>
<dbReference type="HPA" id="ENSG00000176428">
    <property type="expression patterns" value="Low tissue specificity"/>
</dbReference>
<dbReference type="MalaCards" id="VPS37D"/>
<dbReference type="MIM" id="610039">
    <property type="type" value="gene"/>
</dbReference>
<dbReference type="neXtProt" id="NX_Q86XT2"/>
<dbReference type="OpenTargets" id="ENSG00000176428"/>
<dbReference type="Orphanet" id="904">
    <property type="disease" value="Williams syndrome"/>
</dbReference>
<dbReference type="PharmGKB" id="PA38308"/>
<dbReference type="VEuPathDB" id="HostDB:ENSG00000176428"/>
<dbReference type="eggNOG" id="KOG3270">
    <property type="taxonomic scope" value="Eukaryota"/>
</dbReference>
<dbReference type="GeneTree" id="ENSGT00950000183012"/>
<dbReference type="HOGENOM" id="CLU_081733_0_0_1"/>
<dbReference type="InParanoid" id="Q86XT2"/>
<dbReference type="OMA" id="WQFQGLQ"/>
<dbReference type="OrthoDB" id="8921242at2759"/>
<dbReference type="PAN-GO" id="Q86XT2">
    <property type="GO annotations" value="4 GO annotations based on evolutionary models"/>
</dbReference>
<dbReference type="PhylomeDB" id="Q86XT2"/>
<dbReference type="TreeFam" id="TF321840"/>
<dbReference type="PathwayCommons" id="Q86XT2"/>
<dbReference type="Reactome" id="R-HSA-162588">
    <property type="pathway name" value="Budding and maturation of HIV virion"/>
</dbReference>
<dbReference type="Reactome" id="R-HSA-174490">
    <property type="pathway name" value="Membrane binding and targetting of GAG proteins"/>
</dbReference>
<dbReference type="Reactome" id="R-HSA-917729">
    <property type="pathway name" value="Endosomal Sorting Complex Required For Transport (ESCRT)"/>
</dbReference>
<dbReference type="Reactome" id="R-HSA-9610379">
    <property type="pathway name" value="HCMV Late Events"/>
</dbReference>
<dbReference type="Reactome" id="R-HSA-9615710">
    <property type="pathway name" value="Late endosomal microautophagy"/>
</dbReference>
<dbReference type="SignaLink" id="Q86XT2"/>
<dbReference type="BioGRID-ORCS" id="155382">
    <property type="hits" value="14 hits in 1143 CRISPR screens"/>
</dbReference>
<dbReference type="GenomeRNAi" id="155382"/>
<dbReference type="Pharos" id="Q86XT2">
    <property type="development level" value="Tdark"/>
</dbReference>
<dbReference type="PRO" id="PR:Q86XT2"/>
<dbReference type="Proteomes" id="UP000005640">
    <property type="component" value="Chromosome 7"/>
</dbReference>
<dbReference type="RNAct" id="Q86XT2">
    <property type="molecule type" value="protein"/>
</dbReference>
<dbReference type="Bgee" id="ENSG00000176428">
    <property type="expression patterns" value="Expressed in cortical plate and 139 other cell types or tissues"/>
</dbReference>
<dbReference type="ExpressionAtlas" id="Q86XT2">
    <property type="expression patterns" value="baseline and differential"/>
</dbReference>
<dbReference type="GO" id="GO:0010008">
    <property type="term" value="C:endosome membrane"/>
    <property type="evidence" value="ECO:0000304"/>
    <property type="project" value="Reactome"/>
</dbReference>
<dbReference type="GO" id="GO:0000813">
    <property type="term" value="C:ESCRT I complex"/>
    <property type="evidence" value="ECO:0000314"/>
    <property type="project" value="UniProtKB"/>
</dbReference>
<dbReference type="GO" id="GO:0070062">
    <property type="term" value="C:extracellular exosome"/>
    <property type="evidence" value="ECO:0007005"/>
    <property type="project" value="UniProtKB"/>
</dbReference>
<dbReference type="GO" id="GO:0031902">
    <property type="term" value="C:late endosome membrane"/>
    <property type="evidence" value="ECO:0007669"/>
    <property type="project" value="UniProtKB-SubCell"/>
</dbReference>
<dbReference type="GO" id="GO:0016236">
    <property type="term" value="P:macroautophagy"/>
    <property type="evidence" value="ECO:0000304"/>
    <property type="project" value="ParkinsonsUK-UCL"/>
</dbReference>
<dbReference type="GO" id="GO:0090148">
    <property type="term" value="P:membrane fission"/>
    <property type="evidence" value="ECO:0000303"/>
    <property type="project" value="ComplexPortal"/>
</dbReference>
<dbReference type="GO" id="GO:0036258">
    <property type="term" value="P:multivesicular body assembly"/>
    <property type="evidence" value="ECO:0000304"/>
    <property type="project" value="ParkinsonsUK-UCL"/>
</dbReference>
<dbReference type="GO" id="GO:0006612">
    <property type="term" value="P:protein targeting to membrane"/>
    <property type="evidence" value="ECO:0000318"/>
    <property type="project" value="GO_Central"/>
</dbReference>
<dbReference type="GO" id="GO:0006623">
    <property type="term" value="P:protein targeting to vacuole"/>
    <property type="evidence" value="ECO:0000318"/>
    <property type="project" value="GO_Central"/>
</dbReference>
<dbReference type="GO" id="GO:0043328">
    <property type="term" value="P:protein transport to vacuole involved in ubiquitin-dependent protein catabolic process via the multivesicular body sorting pathway"/>
    <property type="evidence" value="ECO:0000303"/>
    <property type="project" value="ComplexPortal"/>
</dbReference>
<dbReference type="GO" id="GO:0043162">
    <property type="term" value="P:ubiquitin-dependent protein catabolic process via the multivesicular body sorting pathway"/>
    <property type="evidence" value="ECO:0000318"/>
    <property type="project" value="GO_Central"/>
</dbReference>
<dbReference type="GO" id="GO:0039702">
    <property type="term" value="P:viral budding via host ESCRT complex"/>
    <property type="evidence" value="ECO:0000304"/>
    <property type="project" value="ParkinsonsUK-UCL"/>
</dbReference>
<dbReference type="InterPro" id="IPR009851">
    <property type="entry name" value="Mod_r"/>
</dbReference>
<dbReference type="PANTHER" id="PTHR13678">
    <property type="entry name" value="VACUOLAR PROTEIN SORTING-ASSOCIATED PROTEIN 37"/>
    <property type="match status" value="1"/>
</dbReference>
<dbReference type="PANTHER" id="PTHR13678:SF12">
    <property type="entry name" value="VACUOLAR PROTEIN SORTING-ASSOCIATED PROTEIN 37D"/>
    <property type="match status" value="1"/>
</dbReference>
<dbReference type="Pfam" id="PF07200">
    <property type="entry name" value="Mod_r"/>
    <property type="match status" value="1"/>
</dbReference>
<dbReference type="PROSITE" id="PS51314">
    <property type="entry name" value="VPS37_C"/>
    <property type="match status" value="1"/>
</dbReference>
<name>VP37D_HUMAN</name>
<organism>
    <name type="scientific">Homo sapiens</name>
    <name type="common">Human</name>
    <dbReference type="NCBI Taxonomy" id="9606"/>
    <lineage>
        <taxon>Eukaryota</taxon>
        <taxon>Metazoa</taxon>
        <taxon>Chordata</taxon>
        <taxon>Craniata</taxon>
        <taxon>Vertebrata</taxon>
        <taxon>Euteleostomi</taxon>
        <taxon>Mammalia</taxon>
        <taxon>Eutheria</taxon>
        <taxon>Euarchontoglires</taxon>
        <taxon>Primates</taxon>
        <taxon>Haplorrhini</taxon>
        <taxon>Catarrhini</taxon>
        <taxon>Hominidae</taxon>
        <taxon>Homo</taxon>
    </lineage>
</organism>
<keyword id="KW-0967">Endosome</keyword>
<keyword id="KW-0472">Membrane</keyword>
<keyword id="KW-0653">Protein transport</keyword>
<keyword id="KW-1267">Proteomics identification</keyword>
<keyword id="KW-1185">Reference proteome</keyword>
<keyword id="KW-0813">Transport</keyword>
<keyword id="KW-0856">Williams-Beuren syndrome</keyword>
<proteinExistence type="evidence at protein level"/>
<accession>Q86XT2</accession>
<accession>Q6P2C3</accession>
<protein>
    <recommendedName>
        <fullName>Vacuolar protein sorting-associated protein 37D</fullName>
    </recommendedName>
    <alternativeName>
        <fullName>ESCRT-I complex subunit VPS37D</fullName>
    </alternativeName>
    <alternativeName>
        <fullName>Williams-Beuren syndrome chromosomal region 24 protein</fullName>
    </alternativeName>
</protein>
<evidence type="ECO:0000255" key="1"/>
<evidence type="ECO:0000255" key="2">
    <source>
        <dbReference type="PROSITE-ProRule" id="PRU00646"/>
    </source>
</evidence>
<evidence type="ECO:0000256" key="3">
    <source>
        <dbReference type="SAM" id="MobiDB-lite"/>
    </source>
</evidence>
<evidence type="ECO:0000269" key="4">
    <source>
    </source>
</evidence>
<evidence type="ECO:0000269" key="5">
    <source>
    </source>
</evidence>
<evidence type="ECO:0000305" key="6"/>
<evidence type="ECO:0000312" key="7">
    <source>
        <dbReference type="EMBL" id="AAL91075.1"/>
    </source>
</evidence>
<evidence type="ECO:0000312" key="8">
    <source>
        <dbReference type="HGNC" id="HGNC:18287"/>
    </source>
</evidence>
<sequence length="251" mass="27730">MYRARAARAGPEPGSPGRFGILSTGQLRDLLQDEPKLDRIVRLSRKFQGLQLEREACLASNYALAKENLALRPRLEMGRAALAIKYQELREVAENCADKLQRLEESMHRWSPHCALGWLQAELEEAEQEAEEQMEQLLLGEQSLEAFLPAFQRGRALAHLRRTQAEKLQELLRRRERSAQPAPTSAADPPKSFPAAAVLPTGAARGPPAVPRSLPPLDSRPVPPLKGSPGCPLGPAPLLSPRPSQPEPPHR</sequence>
<feature type="chain" id="PRO_0000328927" description="Vacuolar protein sorting-associated protein 37D">
    <location>
        <begin position="1"/>
        <end position="251"/>
    </location>
</feature>
<feature type="domain" description="VPS37 C-terminal" evidence="2">
    <location>
        <begin position="93"/>
        <end position="182"/>
    </location>
</feature>
<feature type="region of interest" description="Disordered" evidence="3">
    <location>
        <begin position="174"/>
        <end position="251"/>
    </location>
</feature>
<feature type="compositionally biased region" description="Pro residues" evidence="3">
    <location>
        <begin position="221"/>
        <end position="251"/>
    </location>
</feature>
<comment type="function">
    <text>Component of the ESCRT-I complex, a regulator of vesicular trafficking process. Required for the sorting of endocytic ubiquitinated cargos into multivesicular bodies. May be involved in cell growth and differentiation.</text>
</comment>
<comment type="subunit">
    <text evidence="4 5">Component of the ESCRT-I complex (endosomal sorting complex required for transport I) which consists of TSG101, VPS28, a VPS37 protein (VPS37A to -D) and MVB12A or MVB12B in a 1:1:1:1 stoichiometry. Interacts with TSG101 and MVB12A. Component of the ESCRT-I complex (endosomal sorting complex required for transport I) which consists of TSG101, VPS28, a VPS37 protein (VPS37A to -D) and UBAP1 in a 1:1:1:1 stoichiometry.</text>
</comment>
<comment type="interaction">
    <interactant intactId="EBI-7604353">
        <id>Q86XT2</id>
    </interactant>
    <interactant intactId="EBI-742909">
        <id>Q9H6L4</id>
        <label>ARMC7</label>
    </interactant>
    <organismsDiffer>false</organismsDiffer>
    <experiments>3</experiments>
</comment>
<comment type="subcellular location">
    <subcellularLocation>
        <location evidence="6">Late endosome membrane</location>
        <topology evidence="6">Peripheral membrane protein</topology>
    </subcellularLocation>
</comment>
<comment type="disease">
    <text>VPS37D is located in the Williams-Beuren syndrome (WBS) critical region. WBS results from a hemizygous deletion of several genes on chromosome 7q11.23, thought to arise as a consequence of unequal crossing over between highly homologous low-copy repeat sequences flanking the deleted region.</text>
</comment>
<comment type="similarity">
    <text evidence="1">Belongs to the VPS37 family.</text>
</comment>
<comment type="sequence caution" evidence="6">
    <conflict type="erroneous initiation">
        <sequence resource="EMBL-CDS" id="AAL91075"/>
    </conflict>
</comment>
<reference evidence="6 7" key="1">
    <citation type="submission" date="2002-03" db="EMBL/GenBank/DDBJ databases">
        <title>Novel genes in the Williams-Beuren Syndrome critical region.</title>
        <authorList>
            <person name="Ucla C."/>
            <person name="Merla G."/>
            <person name="Reymond A."/>
        </authorList>
    </citation>
    <scope>NUCLEOTIDE SEQUENCE [MRNA]</scope>
</reference>
<reference evidence="6" key="2">
    <citation type="journal article" date="2003" name="Nature">
        <title>The DNA sequence of human chromosome 7.</title>
        <authorList>
            <person name="Hillier L.W."/>
            <person name="Fulton R.S."/>
            <person name="Fulton L.A."/>
            <person name="Graves T.A."/>
            <person name="Pepin K.H."/>
            <person name="Wagner-McPherson C."/>
            <person name="Layman D."/>
            <person name="Maas J."/>
            <person name="Jaeger S."/>
            <person name="Walker R."/>
            <person name="Wylie K."/>
            <person name="Sekhon M."/>
            <person name="Becker M.C."/>
            <person name="O'Laughlin M.D."/>
            <person name="Schaller M.E."/>
            <person name="Fewell G.A."/>
            <person name="Delehaunty K.D."/>
            <person name="Miner T.L."/>
            <person name="Nash W.E."/>
            <person name="Cordes M."/>
            <person name="Du H."/>
            <person name="Sun H."/>
            <person name="Edwards J."/>
            <person name="Bradshaw-Cordum H."/>
            <person name="Ali J."/>
            <person name="Andrews S."/>
            <person name="Isak A."/>
            <person name="Vanbrunt A."/>
            <person name="Nguyen C."/>
            <person name="Du F."/>
            <person name="Lamar B."/>
            <person name="Courtney L."/>
            <person name="Kalicki J."/>
            <person name="Ozersky P."/>
            <person name="Bielicki L."/>
            <person name="Scott K."/>
            <person name="Holmes A."/>
            <person name="Harkins R."/>
            <person name="Harris A."/>
            <person name="Strong C.M."/>
            <person name="Hou S."/>
            <person name="Tomlinson C."/>
            <person name="Dauphin-Kohlberg S."/>
            <person name="Kozlowicz-Reilly A."/>
            <person name="Leonard S."/>
            <person name="Rohlfing T."/>
            <person name="Rock S.M."/>
            <person name="Tin-Wollam A.-M."/>
            <person name="Abbott A."/>
            <person name="Minx P."/>
            <person name="Maupin R."/>
            <person name="Strowmatt C."/>
            <person name="Latreille P."/>
            <person name="Miller N."/>
            <person name="Johnson D."/>
            <person name="Murray J."/>
            <person name="Woessner J.P."/>
            <person name="Wendl M.C."/>
            <person name="Yang S.-P."/>
            <person name="Schultz B.R."/>
            <person name="Wallis J.W."/>
            <person name="Spieth J."/>
            <person name="Bieri T.A."/>
            <person name="Nelson J.O."/>
            <person name="Berkowicz N."/>
            <person name="Wohldmann P.E."/>
            <person name="Cook L.L."/>
            <person name="Hickenbotham M.T."/>
            <person name="Eldred J."/>
            <person name="Williams D."/>
            <person name="Bedell J.A."/>
            <person name="Mardis E.R."/>
            <person name="Clifton S.W."/>
            <person name="Chissoe S.L."/>
            <person name="Marra M.A."/>
            <person name="Raymond C."/>
            <person name="Haugen E."/>
            <person name="Gillett W."/>
            <person name="Zhou Y."/>
            <person name="James R."/>
            <person name="Phelps K."/>
            <person name="Iadanoto S."/>
            <person name="Bubb K."/>
            <person name="Simms E."/>
            <person name="Levy R."/>
            <person name="Clendenning J."/>
            <person name="Kaul R."/>
            <person name="Kent W.J."/>
            <person name="Furey T.S."/>
            <person name="Baertsch R.A."/>
            <person name="Brent M.R."/>
            <person name="Keibler E."/>
            <person name="Flicek P."/>
            <person name="Bork P."/>
            <person name="Suyama M."/>
            <person name="Bailey J.A."/>
            <person name="Portnoy M.E."/>
            <person name="Torrents D."/>
            <person name="Chinwalla A.T."/>
            <person name="Gish W.R."/>
            <person name="Eddy S.R."/>
            <person name="McPherson J.D."/>
            <person name="Olson M.V."/>
            <person name="Eichler E.E."/>
            <person name="Green E.D."/>
            <person name="Waterston R.H."/>
            <person name="Wilson R.K."/>
        </authorList>
    </citation>
    <scope>NUCLEOTIDE SEQUENCE [LARGE SCALE GENOMIC DNA]</scope>
</reference>
<reference evidence="6" key="3">
    <citation type="journal article" date="2004" name="Genome Res.">
        <title>The status, quality, and expansion of the NIH full-length cDNA project: the Mammalian Gene Collection (MGC).</title>
        <authorList>
            <consortium name="The MGC Project Team"/>
        </authorList>
    </citation>
    <scope>NUCLEOTIDE SEQUENCE [LARGE SCALE MRNA] OF 14-251</scope>
    <source>
        <tissue>Ovary</tissue>
    </source>
</reference>
<reference evidence="6" key="4">
    <citation type="journal article" date="2004" name="J. Biol. Chem.">
        <title>The human endosomal sorting complex required for transport (ESCRT-I) and its role in HIV-1 budding.</title>
        <authorList>
            <person name="Stuchell M.D."/>
            <person name="Garrus J.E."/>
            <person name="Mueller B."/>
            <person name="Stray K.M."/>
            <person name="Ghaffarian S."/>
            <person name="McKinnon R."/>
            <person name="Kraeusslich H.-G."/>
            <person name="Morham S.G."/>
            <person name="Sundquist W.I."/>
        </authorList>
    </citation>
    <scope>IDENTIFICATION</scope>
</reference>
<reference key="5">
    <citation type="journal article" date="2007" name="Cell Host Microbe">
        <title>Identification of human MVB12 proteins as ESCRT-I subunits that function in HIV budding.</title>
        <authorList>
            <person name="Morita E."/>
            <person name="Sandrin V."/>
            <person name="Alam S.L."/>
            <person name="Eckert D.M."/>
            <person name="Gygi S.P."/>
            <person name="Sundquist W.I."/>
        </authorList>
    </citation>
    <scope>INTERACTION WITH TSG101 AND MVB12A</scope>
    <scope>IDENTIFICATION BY MASS SPECTROMETRY</scope>
</reference>
<reference key="6">
    <citation type="journal article" date="2012" name="Structure">
        <title>The UBAP1 subunit of ESCRT-I interacts with ubiquitin via a SOUBA domain.</title>
        <authorList>
            <person name="Agromayor M."/>
            <person name="Soler N."/>
            <person name="Caballe A."/>
            <person name="Kueck T."/>
            <person name="Freund S.M."/>
            <person name="Allen M.D."/>
            <person name="Bycroft M."/>
            <person name="Perisic O."/>
            <person name="Ye Y."/>
            <person name="McDonald B."/>
            <person name="Scheel H."/>
            <person name="Hofmann K."/>
            <person name="Neil S.J."/>
            <person name="Martin-Serrano J."/>
            <person name="Williams R.L."/>
        </authorList>
    </citation>
    <scope>IDENTIFICATION IN AN ESCRT-I COMPLEX WITH UBAP1</scope>
    <scope>SUBUNIT</scope>
</reference>
<gene>
    <name evidence="8" type="primary">VPS37D</name>
    <name evidence="7" type="synonym">WBSCR24</name>
</gene>